<protein>
    <recommendedName>
        <fullName evidence="1">Enolase</fullName>
        <ecNumber evidence="1">4.2.1.11</ecNumber>
    </recommendedName>
    <alternativeName>
        <fullName evidence="1">2-phospho-D-glycerate hydro-lyase</fullName>
    </alternativeName>
    <alternativeName>
        <fullName evidence="1">2-phosphoglycerate dehydratase</fullName>
    </alternativeName>
</protein>
<reference key="1">
    <citation type="submission" date="2008-05" db="EMBL/GenBank/DDBJ databases">
        <title>Complete sequence of chromosome 1 of Ralstonia pickettii 12J.</title>
        <authorList>
            <person name="Lucas S."/>
            <person name="Copeland A."/>
            <person name="Lapidus A."/>
            <person name="Glavina del Rio T."/>
            <person name="Dalin E."/>
            <person name="Tice H."/>
            <person name="Bruce D."/>
            <person name="Goodwin L."/>
            <person name="Pitluck S."/>
            <person name="Meincke L."/>
            <person name="Brettin T."/>
            <person name="Detter J.C."/>
            <person name="Han C."/>
            <person name="Kuske C.R."/>
            <person name="Schmutz J."/>
            <person name="Larimer F."/>
            <person name="Land M."/>
            <person name="Hauser L."/>
            <person name="Kyrpides N."/>
            <person name="Mikhailova N."/>
            <person name="Marsh T."/>
            <person name="Richardson P."/>
        </authorList>
    </citation>
    <scope>NUCLEOTIDE SEQUENCE [LARGE SCALE GENOMIC DNA]</scope>
    <source>
        <strain>12J</strain>
    </source>
</reference>
<organism>
    <name type="scientific">Ralstonia pickettii (strain 12J)</name>
    <dbReference type="NCBI Taxonomy" id="402626"/>
    <lineage>
        <taxon>Bacteria</taxon>
        <taxon>Pseudomonadati</taxon>
        <taxon>Pseudomonadota</taxon>
        <taxon>Betaproteobacteria</taxon>
        <taxon>Burkholderiales</taxon>
        <taxon>Burkholderiaceae</taxon>
        <taxon>Ralstonia</taxon>
    </lineage>
</organism>
<feature type="chain" id="PRO_1000115902" description="Enolase">
    <location>
        <begin position="1"/>
        <end position="427"/>
    </location>
</feature>
<feature type="active site" description="Proton donor" evidence="1">
    <location>
        <position position="205"/>
    </location>
</feature>
<feature type="active site" description="Proton acceptor" evidence="1">
    <location>
        <position position="337"/>
    </location>
</feature>
<feature type="binding site" evidence="1">
    <location>
        <position position="163"/>
    </location>
    <ligand>
        <name>(2R)-2-phosphoglycerate</name>
        <dbReference type="ChEBI" id="CHEBI:58289"/>
    </ligand>
</feature>
<feature type="binding site" evidence="1">
    <location>
        <position position="242"/>
    </location>
    <ligand>
        <name>Mg(2+)</name>
        <dbReference type="ChEBI" id="CHEBI:18420"/>
    </ligand>
</feature>
<feature type="binding site" evidence="1">
    <location>
        <position position="285"/>
    </location>
    <ligand>
        <name>Mg(2+)</name>
        <dbReference type="ChEBI" id="CHEBI:18420"/>
    </ligand>
</feature>
<feature type="binding site" evidence="1">
    <location>
        <position position="312"/>
    </location>
    <ligand>
        <name>Mg(2+)</name>
        <dbReference type="ChEBI" id="CHEBI:18420"/>
    </ligand>
</feature>
<feature type="binding site" evidence="1">
    <location>
        <position position="337"/>
    </location>
    <ligand>
        <name>(2R)-2-phosphoglycerate</name>
        <dbReference type="ChEBI" id="CHEBI:58289"/>
    </ligand>
</feature>
<feature type="binding site" evidence="1">
    <location>
        <position position="366"/>
    </location>
    <ligand>
        <name>(2R)-2-phosphoglycerate</name>
        <dbReference type="ChEBI" id="CHEBI:58289"/>
    </ligand>
</feature>
<feature type="binding site" evidence="1">
    <location>
        <position position="367"/>
    </location>
    <ligand>
        <name>(2R)-2-phosphoglycerate</name>
        <dbReference type="ChEBI" id="CHEBI:58289"/>
    </ligand>
</feature>
<feature type="binding site" evidence="1">
    <location>
        <position position="388"/>
    </location>
    <ligand>
        <name>(2R)-2-phosphoglycerate</name>
        <dbReference type="ChEBI" id="CHEBI:58289"/>
    </ligand>
</feature>
<evidence type="ECO:0000255" key="1">
    <source>
        <dbReference type="HAMAP-Rule" id="MF_00318"/>
    </source>
</evidence>
<comment type="function">
    <text evidence="1">Catalyzes the reversible conversion of 2-phosphoglycerate (2-PG) into phosphoenolpyruvate (PEP). It is essential for the degradation of carbohydrates via glycolysis.</text>
</comment>
<comment type="catalytic activity">
    <reaction evidence="1">
        <text>(2R)-2-phosphoglycerate = phosphoenolpyruvate + H2O</text>
        <dbReference type="Rhea" id="RHEA:10164"/>
        <dbReference type="ChEBI" id="CHEBI:15377"/>
        <dbReference type="ChEBI" id="CHEBI:58289"/>
        <dbReference type="ChEBI" id="CHEBI:58702"/>
        <dbReference type="EC" id="4.2.1.11"/>
    </reaction>
</comment>
<comment type="cofactor">
    <cofactor evidence="1">
        <name>Mg(2+)</name>
        <dbReference type="ChEBI" id="CHEBI:18420"/>
    </cofactor>
    <text evidence="1">Binds a second Mg(2+) ion via substrate during catalysis.</text>
</comment>
<comment type="pathway">
    <text evidence="1">Carbohydrate degradation; glycolysis; pyruvate from D-glyceraldehyde 3-phosphate: step 4/5.</text>
</comment>
<comment type="subcellular location">
    <subcellularLocation>
        <location evidence="1">Cytoplasm</location>
    </subcellularLocation>
    <subcellularLocation>
        <location evidence="1">Secreted</location>
    </subcellularLocation>
    <subcellularLocation>
        <location evidence="1">Cell surface</location>
    </subcellularLocation>
    <text evidence="1">Fractions of enolase are present in both the cytoplasm and on the cell surface.</text>
</comment>
<comment type="similarity">
    <text evidence="1">Belongs to the enolase family.</text>
</comment>
<keyword id="KW-0963">Cytoplasm</keyword>
<keyword id="KW-0324">Glycolysis</keyword>
<keyword id="KW-0456">Lyase</keyword>
<keyword id="KW-0460">Magnesium</keyword>
<keyword id="KW-0479">Metal-binding</keyword>
<keyword id="KW-0964">Secreted</keyword>
<dbReference type="EC" id="4.2.1.11" evidence="1"/>
<dbReference type="EMBL" id="CP001068">
    <property type="protein sequence ID" value="ACD26120.1"/>
    <property type="molecule type" value="Genomic_DNA"/>
</dbReference>
<dbReference type="SMR" id="B2U9C3"/>
<dbReference type="STRING" id="402626.Rpic_0972"/>
<dbReference type="KEGG" id="rpi:Rpic_0972"/>
<dbReference type="eggNOG" id="COG0148">
    <property type="taxonomic scope" value="Bacteria"/>
</dbReference>
<dbReference type="HOGENOM" id="CLU_031223_2_1_4"/>
<dbReference type="UniPathway" id="UPA00109">
    <property type="reaction ID" value="UER00187"/>
</dbReference>
<dbReference type="GO" id="GO:0009986">
    <property type="term" value="C:cell surface"/>
    <property type="evidence" value="ECO:0007669"/>
    <property type="project" value="UniProtKB-SubCell"/>
</dbReference>
<dbReference type="GO" id="GO:0005576">
    <property type="term" value="C:extracellular region"/>
    <property type="evidence" value="ECO:0007669"/>
    <property type="project" value="UniProtKB-SubCell"/>
</dbReference>
<dbReference type="GO" id="GO:0000015">
    <property type="term" value="C:phosphopyruvate hydratase complex"/>
    <property type="evidence" value="ECO:0007669"/>
    <property type="project" value="InterPro"/>
</dbReference>
<dbReference type="GO" id="GO:0000287">
    <property type="term" value="F:magnesium ion binding"/>
    <property type="evidence" value="ECO:0007669"/>
    <property type="project" value="UniProtKB-UniRule"/>
</dbReference>
<dbReference type="GO" id="GO:0004634">
    <property type="term" value="F:phosphopyruvate hydratase activity"/>
    <property type="evidence" value="ECO:0007669"/>
    <property type="project" value="UniProtKB-UniRule"/>
</dbReference>
<dbReference type="GO" id="GO:0006096">
    <property type="term" value="P:glycolytic process"/>
    <property type="evidence" value="ECO:0007669"/>
    <property type="project" value="UniProtKB-UniRule"/>
</dbReference>
<dbReference type="CDD" id="cd03313">
    <property type="entry name" value="enolase"/>
    <property type="match status" value="1"/>
</dbReference>
<dbReference type="FunFam" id="3.20.20.120:FF:000001">
    <property type="entry name" value="Enolase"/>
    <property type="match status" value="1"/>
</dbReference>
<dbReference type="FunFam" id="3.30.390.10:FF:000001">
    <property type="entry name" value="Enolase"/>
    <property type="match status" value="1"/>
</dbReference>
<dbReference type="Gene3D" id="3.20.20.120">
    <property type="entry name" value="Enolase-like C-terminal domain"/>
    <property type="match status" value="1"/>
</dbReference>
<dbReference type="Gene3D" id="3.30.390.10">
    <property type="entry name" value="Enolase-like, N-terminal domain"/>
    <property type="match status" value="1"/>
</dbReference>
<dbReference type="HAMAP" id="MF_00318">
    <property type="entry name" value="Enolase"/>
    <property type="match status" value="1"/>
</dbReference>
<dbReference type="InterPro" id="IPR000941">
    <property type="entry name" value="Enolase"/>
</dbReference>
<dbReference type="InterPro" id="IPR036849">
    <property type="entry name" value="Enolase-like_C_sf"/>
</dbReference>
<dbReference type="InterPro" id="IPR029017">
    <property type="entry name" value="Enolase-like_N"/>
</dbReference>
<dbReference type="InterPro" id="IPR020810">
    <property type="entry name" value="Enolase_C"/>
</dbReference>
<dbReference type="InterPro" id="IPR020809">
    <property type="entry name" value="Enolase_CS"/>
</dbReference>
<dbReference type="InterPro" id="IPR020811">
    <property type="entry name" value="Enolase_N"/>
</dbReference>
<dbReference type="NCBIfam" id="TIGR01060">
    <property type="entry name" value="eno"/>
    <property type="match status" value="1"/>
</dbReference>
<dbReference type="PANTHER" id="PTHR11902">
    <property type="entry name" value="ENOLASE"/>
    <property type="match status" value="1"/>
</dbReference>
<dbReference type="PANTHER" id="PTHR11902:SF1">
    <property type="entry name" value="ENOLASE"/>
    <property type="match status" value="1"/>
</dbReference>
<dbReference type="Pfam" id="PF00113">
    <property type="entry name" value="Enolase_C"/>
    <property type="match status" value="1"/>
</dbReference>
<dbReference type="Pfam" id="PF03952">
    <property type="entry name" value="Enolase_N"/>
    <property type="match status" value="1"/>
</dbReference>
<dbReference type="PIRSF" id="PIRSF001400">
    <property type="entry name" value="Enolase"/>
    <property type="match status" value="1"/>
</dbReference>
<dbReference type="PRINTS" id="PR00148">
    <property type="entry name" value="ENOLASE"/>
</dbReference>
<dbReference type="SFLD" id="SFLDF00002">
    <property type="entry name" value="enolase"/>
    <property type="match status" value="1"/>
</dbReference>
<dbReference type="SFLD" id="SFLDG00178">
    <property type="entry name" value="enolase"/>
    <property type="match status" value="1"/>
</dbReference>
<dbReference type="SMART" id="SM01192">
    <property type="entry name" value="Enolase_C"/>
    <property type="match status" value="1"/>
</dbReference>
<dbReference type="SMART" id="SM01193">
    <property type="entry name" value="Enolase_N"/>
    <property type="match status" value="1"/>
</dbReference>
<dbReference type="SUPFAM" id="SSF51604">
    <property type="entry name" value="Enolase C-terminal domain-like"/>
    <property type="match status" value="1"/>
</dbReference>
<dbReference type="SUPFAM" id="SSF54826">
    <property type="entry name" value="Enolase N-terminal domain-like"/>
    <property type="match status" value="1"/>
</dbReference>
<dbReference type="PROSITE" id="PS00164">
    <property type="entry name" value="ENOLASE"/>
    <property type="match status" value="1"/>
</dbReference>
<name>ENO_RALPJ</name>
<accession>B2U9C3</accession>
<gene>
    <name evidence="1" type="primary">eno</name>
    <name type="ordered locus">Rpic_0972</name>
</gene>
<sequence length="427" mass="45641">MSAIVDIIGREVLDSRGNPTVECDVLLESGVMGRAAVPSGASTGSREAIELRDGDKSRYLGKGVLKAVEHINTEISEAIMGLDASEQAFLDRTLIDLDGTENKSRLGANAMLAVSMAVAKAAAEEAGLPLYRYFGGSGAMQMPVPMMNIVNGGAHANNSLDIQEFMVMPVGQSSFREALRCGAEIFHALKKILADKGMSTAVGDEGGFAPNFASNEECLNTILSAIEQAGYKAGEDVLLALDCAASEFYKDGKYHLEGEGLQLSSEDFANYLANLADKFPIVSIEDGMHESDWAGWKALTDKLGKKVQLVGDDLFVTNTKILKEGIEKGIANSILIKINQIGTLTETFAAIEMAKRAGYTAVISHRSGETEDSTIADIAVGTNAGQIKTGSLSRSDRMAKYNQLLRIEEDLGDIASYPGKSAFYNLR</sequence>
<proteinExistence type="inferred from homology"/>